<sequence length="443" mass="49836">MSKTYHFIGIKGSGMSALALMLHQMGHNVQGSDVDKYYFTQRGLEQAGVTILPFSPNNISEDLEIIAGNAFRPDNNEELAYVIEKGYHFKRYHEFLGDFMRQFTSLGVAGAHGKTSTTGLLAHVLKNITDTSFLIGDGTGRGSANANYFVFEADEYERHFMPYHPEYSIITNIDFDHPDYFTGLEDVFNAFNDYAKQVQKGLFIYGEDSKLHEITSKAPIYYYGFEDSNDFIAKDITRTVNGSDFKVFYNQEEIGQFHVPAYGKHNILNATAVIANLYIMGIDMALVAEHLKTFSGVKRRFTEKIIDDTVIIDDFAHHPTEIIATLDAARQKYPSKEIVAIFQPHTFTRTIALLDDFAHALSQADSVYLAQIYGSAREVDNGEVKVEDLAAKIVKHSDLVTVENVSPLLNHDNAVYVFMGAGDIQLYERSFEELLANLTKNTQ</sequence>
<dbReference type="EC" id="6.3.2.8" evidence="1"/>
<dbReference type="EMBL" id="AL766852">
    <property type="protein sequence ID" value="CAD47323.1"/>
    <property type="molecule type" value="Genomic_DNA"/>
</dbReference>
<dbReference type="RefSeq" id="WP_000048109.1">
    <property type="nucleotide sequence ID" value="NC_004368.1"/>
</dbReference>
<dbReference type="SMR" id="Q8E3U2"/>
<dbReference type="KEGG" id="san:murC"/>
<dbReference type="eggNOG" id="COG0773">
    <property type="taxonomic scope" value="Bacteria"/>
</dbReference>
<dbReference type="HOGENOM" id="CLU_028104_1_0_9"/>
<dbReference type="UniPathway" id="UPA00219"/>
<dbReference type="Proteomes" id="UP000000823">
    <property type="component" value="Chromosome"/>
</dbReference>
<dbReference type="GO" id="GO:0005737">
    <property type="term" value="C:cytoplasm"/>
    <property type="evidence" value="ECO:0007669"/>
    <property type="project" value="UniProtKB-SubCell"/>
</dbReference>
<dbReference type="GO" id="GO:0005524">
    <property type="term" value="F:ATP binding"/>
    <property type="evidence" value="ECO:0007669"/>
    <property type="project" value="UniProtKB-UniRule"/>
</dbReference>
<dbReference type="GO" id="GO:0008763">
    <property type="term" value="F:UDP-N-acetylmuramate-L-alanine ligase activity"/>
    <property type="evidence" value="ECO:0007669"/>
    <property type="project" value="UniProtKB-UniRule"/>
</dbReference>
<dbReference type="GO" id="GO:0051301">
    <property type="term" value="P:cell division"/>
    <property type="evidence" value="ECO:0007669"/>
    <property type="project" value="UniProtKB-KW"/>
</dbReference>
<dbReference type="GO" id="GO:0071555">
    <property type="term" value="P:cell wall organization"/>
    <property type="evidence" value="ECO:0007669"/>
    <property type="project" value="UniProtKB-KW"/>
</dbReference>
<dbReference type="GO" id="GO:0009252">
    <property type="term" value="P:peptidoglycan biosynthetic process"/>
    <property type="evidence" value="ECO:0007669"/>
    <property type="project" value="UniProtKB-UniRule"/>
</dbReference>
<dbReference type="GO" id="GO:0008360">
    <property type="term" value="P:regulation of cell shape"/>
    <property type="evidence" value="ECO:0007669"/>
    <property type="project" value="UniProtKB-KW"/>
</dbReference>
<dbReference type="Gene3D" id="3.90.190.20">
    <property type="entry name" value="Mur ligase, C-terminal domain"/>
    <property type="match status" value="1"/>
</dbReference>
<dbReference type="Gene3D" id="3.40.1190.10">
    <property type="entry name" value="Mur-like, catalytic domain"/>
    <property type="match status" value="1"/>
</dbReference>
<dbReference type="Gene3D" id="3.40.50.720">
    <property type="entry name" value="NAD(P)-binding Rossmann-like Domain"/>
    <property type="match status" value="1"/>
</dbReference>
<dbReference type="HAMAP" id="MF_00046">
    <property type="entry name" value="MurC"/>
    <property type="match status" value="1"/>
</dbReference>
<dbReference type="InterPro" id="IPR036565">
    <property type="entry name" value="Mur-like_cat_sf"/>
</dbReference>
<dbReference type="InterPro" id="IPR004101">
    <property type="entry name" value="Mur_ligase_C"/>
</dbReference>
<dbReference type="InterPro" id="IPR036615">
    <property type="entry name" value="Mur_ligase_C_dom_sf"/>
</dbReference>
<dbReference type="InterPro" id="IPR013221">
    <property type="entry name" value="Mur_ligase_cen"/>
</dbReference>
<dbReference type="InterPro" id="IPR000713">
    <property type="entry name" value="Mur_ligase_N"/>
</dbReference>
<dbReference type="InterPro" id="IPR050061">
    <property type="entry name" value="MurCDEF_pg_biosynth"/>
</dbReference>
<dbReference type="InterPro" id="IPR005758">
    <property type="entry name" value="UDP-N-AcMur_Ala_ligase_MurC"/>
</dbReference>
<dbReference type="NCBIfam" id="TIGR01082">
    <property type="entry name" value="murC"/>
    <property type="match status" value="1"/>
</dbReference>
<dbReference type="PANTHER" id="PTHR43445:SF3">
    <property type="entry name" value="UDP-N-ACETYLMURAMATE--L-ALANINE LIGASE"/>
    <property type="match status" value="1"/>
</dbReference>
<dbReference type="PANTHER" id="PTHR43445">
    <property type="entry name" value="UDP-N-ACETYLMURAMATE--L-ALANINE LIGASE-RELATED"/>
    <property type="match status" value="1"/>
</dbReference>
<dbReference type="Pfam" id="PF01225">
    <property type="entry name" value="Mur_ligase"/>
    <property type="match status" value="1"/>
</dbReference>
<dbReference type="Pfam" id="PF02875">
    <property type="entry name" value="Mur_ligase_C"/>
    <property type="match status" value="1"/>
</dbReference>
<dbReference type="Pfam" id="PF08245">
    <property type="entry name" value="Mur_ligase_M"/>
    <property type="match status" value="1"/>
</dbReference>
<dbReference type="SUPFAM" id="SSF51984">
    <property type="entry name" value="MurCD N-terminal domain"/>
    <property type="match status" value="1"/>
</dbReference>
<dbReference type="SUPFAM" id="SSF53623">
    <property type="entry name" value="MurD-like peptide ligases, catalytic domain"/>
    <property type="match status" value="1"/>
</dbReference>
<dbReference type="SUPFAM" id="SSF53244">
    <property type="entry name" value="MurD-like peptide ligases, peptide-binding domain"/>
    <property type="match status" value="1"/>
</dbReference>
<evidence type="ECO:0000255" key="1">
    <source>
        <dbReference type="HAMAP-Rule" id="MF_00046"/>
    </source>
</evidence>
<protein>
    <recommendedName>
        <fullName evidence="1">UDP-N-acetylmuramate--L-alanine ligase</fullName>
        <ecNumber evidence="1">6.3.2.8</ecNumber>
    </recommendedName>
    <alternativeName>
        <fullName evidence="1">UDP-N-acetylmuramoyl-L-alanine synthetase</fullName>
    </alternativeName>
</protein>
<feature type="chain" id="PRO_0000182161" description="UDP-N-acetylmuramate--L-alanine ligase">
    <location>
        <begin position="1"/>
        <end position="443"/>
    </location>
</feature>
<feature type="binding site" evidence="1">
    <location>
        <begin position="110"/>
        <end position="116"/>
    </location>
    <ligand>
        <name>ATP</name>
        <dbReference type="ChEBI" id="CHEBI:30616"/>
    </ligand>
</feature>
<proteinExistence type="inferred from homology"/>
<name>MURC_STRA3</name>
<accession>Q8E3U2</accession>
<organism>
    <name type="scientific">Streptococcus agalactiae serotype III (strain NEM316)</name>
    <dbReference type="NCBI Taxonomy" id="211110"/>
    <lineage>
        <taxon>Bacteria</taxon>
        <taxon>Bacillati</taxon>
        <taxon>Bacillota</taxon>
        <taxon>Bacilli</taxon>
        <taxon>Lactobacillales</taxon>
        <taxon>Streptococcaceae</taxon>
        <taxon>Streptococcus</taxon>
    </lineage>
</organism>
<reference key="1">
    <citation type="journal article" date="2002" name="Mol. Microbiol.">
        <title>Genome sequence of Streptococcus agalactiae, a pathogen causing invasive neonatal disease.</title>
        <authorList>
            <person name="Glaser P."/>
            <person name="Rusniok C."/>
            <person name="Buchrieser C."/>
            <person name="Chevalier F."/>
            <person name="Frangeul L."/>
            <person name="Msadek T."/>
            <person name="Zouine M."/>
            <person name="Couve E."/>
            <person name="Lalioui L."/>
            <person name="Poyart C."/>
            <person name="Trieu-Cuot P."/>
            <person name="Kunst F."/>
        </authorList>
    </citation>
    <scope>NUCLEOTIDE SEQUENCE [LARGE SCALE GENOMIC DNA]</scope>
    <source>
        <strain>NEM316</strain>
    </source>
</reference>
<comment type="function">
    <text evidence="1">Cell wall formation.</text>
</comment>
<comment type="catalytic activity">
    <reaction evidence="1">
        <text>UDP-N-acetyl-alpha-D-muramate + L-alanine + ATP = UDP-N-acetyl-alpha-D-muramoyl-L-alanine + ADP + phosphate + H(+)</text>
        <dbReference type="Rhea" id="RHEA:23372"/>
        <dbReference type="ChEBI" id="CHEBI:15378"/>
        <dbReference type="ChEBI" id="CHEBI:30616"/>
        <dbReference type="ChEBI" id="CHEBI:43474"/>
        <dbReference type="ChEBI" id="CHEBI:57972"/>
        <dbReference type="ChEBI" id="CHEBI:70757"/>
        <dbReference type="ChEBI" id="CHEBI:83898"/>
        <dbReference type="ChEBI" id="CHEBI:456216"/>
        <dbReference type="EC" id="6.3.2.8"/>
    </reaction>
</comment>
<comment type="pathway">
    <text evidence="1">Cell wall biogenesis; peptidoglycan biosynthesis.</text>
</comment>
<comment type="subcellular location">
    <subcellularLocation>
        <location evidence="1">Cytoplasm</location>
    </subcellularLocation>
</comment>
<comment type="similarity">
    <text evidence="1">Belongs to the MurCDEF family.</text>
</comment>
<gene>
    <name evidence="1" type="primary">murC</name>
    <name type="ordered locus">gbs1664</name>
</gene>
<keyword id="KW-0067">ATP-binding</keyword>
<keyword id="KW-0131">Cell cycle</keyword>
<keyword id="KW-0132">Cell division</keyword>
<keyword id="KW-0133">Cell shape</keyword>
<keyword id="KW-0961">Cell wall biogenesis/degradation</keyword>
<keyword id="KW-0963">Cytoplasm</keyword>
<keyword id="KW-0436">Ligase</keyword>
<keyword id="KW-0547">Nucleotide-binding</keyword>
<keyword id="KW-0573">Peptidoglycan synthesis</keyword>